<keyword id="KW-0413">Isomerase</keyword>
<sequence>MATFMTEDFLLKNDIARTLYHKYAAPMPIYDFHCHLSPQEIADDRRFDNLGQIWLEGDHYKWRALRSAGVDESLITGKETSDYEKYMAWANTVPKTLGNPLYHWTHLELRRPFGITGTLFGPDTAESIWTQCNEKLATPAFSARGIMQQMNVRMVGTTDDPIDSLEYHRQIAADDSIDIEVAPSWRPDKVFKIELDGFVDYLRKLEAAADVSITRFDDLRQALTRRLDHFAACGCRASDHGIETLRFAPVPDDAQLDAILGKRLAGETLSELEIAQFTTAVLVWLGRQYAARGWVMQLHIGAIRNNNTRMFRLLGPDTGFDSIGDNNISWALSRLLDSMDVTNELPKTILYCLNPRDNEVLATMIGNFQGPGIAGKVQFGSGWWFNDQKDGMLRQLEQLSQMGLLSQFVGMLTDSRSFLSYTRHEYFRRILCNLLGQWAQDGEIPDDEAMLSRMVQDICFNNAQRYFTIK</sequence>
<reference key="1">
    <citation type="journal article" date="2011" name="J. Bacteriol.">
        <title>Comparative genomics of 28 Salmonella enterica isolates: evidence for CRISPR-mediated adaptive sublineage evolution.</title>
        <authorList>
            <person name="Fricke W.F."/>
            <person name="Mammel M.K."/>
            <person name="McDermott P.F."/>
            <person name="Tartera C."/>
            <person name="White D.G."/>
            <person name="Leclerc J.E."/>
            <person name="Ravel J."/>
            <person name="Cebula T.A."/>
        </authorList>
    </citation>
    <scope>NUCLEOTIDE SEQUENCE [LARGE SCALE GENOMIC DNA]</scope>
    <source>
        <strain>CVM19633</strain>
    </source>
</reference>
<comment type="catalytic activity">
    <reaction evidence="1">
        <text>D-glucuronate = D-fructuronate</text>
        <dbReference type="Rhea" id="RHEA:13049"/>
        <dbReference type="ChEBI" id="CHEBI:58720"/>
        <dbReference type="ChEBI" id="CHEBI:59863"/>
        <dbReference type="EC" id="5.3.1.12"/>
    </reaction>
</comment>
<comment type="catalytic activity">
    <reaction evidence="1">
        <text>aldehydo-D-galacturonate = keto-D-tagaturonate</text>
        <dbReference type="Rhea" id="RHEA:27702"/>
        <dbReference type="ChEBI" id="CHEBI:12952"/>
        <dbReference type="ChEBI" id="CHEBI:17886"/>
        <dbReference type="EC" id="5.3.1.12"/>
    </reaction>
</comment>
<comment type="pathway">
    <text evidence="1">Carbohydrate metabolism; pentose and glucuronate interconversion.</text>
</comment>
<comment type="similarity">
    <text evidence="1">Belongs to the metallo-dependent hydrolases superfamily. Uronate isomerase family.</text>
</comment>
<feature type="chain" id="PRO_1000131607" description="Uronate isomerase">
    <location>
        <begin position="1"/>
        <end position="470"/>
    </location>
</feature>
<accession>B4TVB3</accession>
<gene>
    <name evidence="1" type="primary">uxaC</name>
    <name type="ordered locus">SeSA_A3319</name>
</gene>
<protein>
    <recommendedName>
        <fullName evidence="1">Uronate isomerase</fullName>
        <ecNumber evidence="1">5.3.1.12</ecNumber>
    </recommendedName>
    <alternativeName>
        <fullName evidence="1">Glucuronate isomerase</fullName>
    </alternativeName>
    <alternativeName>
        <fullName evidence="1">Uronic isomerase</fullName>
    </alternativeName>
</protein>
<organism>
    <name type="scientific">Salmonella schwarzengrund (strain CVM19633)</name>
    <dbReference type="NCBI Taxonomy" id="439843"/>
    <lineage>
        <taxon>Bacteria</taxon>
        <taxon>Pseudomonadati</taxon>
        <taxon>Pseudomonadota</taxon>
        <taxon>Gammaproteobacteria</taxon>
        <taxon>Enterobacterales</taxon>
        <taxon>Enterobacteriaceae</taxon>
        <taxon>Salmonella</taxon>
    </lineage>
</organism>
<evidence type="ECO:0000255" key="1">
    <source>
        <dbReference type="HAMAP-Rule" id="MF_00675"/>
    </source>
</evidence>
<dbReference type="EC" id="5.3.1.12" evidence="1"/>
<dbReference type="EMBL" id="CP001127">
    <property type="protein sequence ID" value="ACF88962.1"/>
    <property type="molecule type" value="Genomic_DNA"/>
</dbReference>
<dbReference type="RefSeq" id="WP_000190182.1">
    <property type="nucleotide sequence ID" value="NC_011094.1"/>
</dbReference>
<dbReference type="SMR" id="B4TVB3"/>
<dbReference type="KEGG" id="sew:SeSA_A3319"/>
<dbReference type="HOGENOM" id="CLU_044465_1_0_6"/>
<dbReference type="UniPathway" id="UPA00246"/>
<dbReference type="Proteomes" id="UP000001865">
    <property type="component" value="Chromosome"/>
</dbReference>
<dbReference type="GO" id="GO:0008880">
    <property type="term" value="F:glucuronate isomerase activity"/>
    <property type="evidence" value="ECO:0007669"/>
    <property type="project" value="UniProtKB-UniRule"/>
</dbReference>
<dbReference type="GO" id="GO:0019698">
    <property type="term" value="P:D-galacturonate catabolic process"/>
    <property type="evidence" value="ECO:0007669"/>
    <property type="project" value="TreeGrafter"/>
</dbReference>
<dbReference type="GO" id="GO:0042840">
    <property type="term" value="P:D-glucuronate catabolic process"/>
    <property type="evidence" value="ECO:0007669"/>
    <property type="project" value="TreeGrafter"/>
</dbReference>
<dbReference type="Gene3D" id="3.20.20.140">
    <property type="entry name" value="Metal-dependent hydrolases"/>
    <property type="match status" value="1"/>
</dbReference>
<dbReference type="Gene3D" id="1.10.2020.10">
    <property type="entry name" value="uronate isomerase, domain 2, chain A"/>
    <property type="match status" value="1"/>
</dbReference>
<dbReference type="HAMAP" id="MF_00675">
    <property type="entry name" value="UxaC"/>
    <property type="match status" value="1"/>
</dbReference>
<dbReference type="InterPro" id="IPR032466">
    <property type="entry name" value="Metal_Hydrolase"/>
</dbReference>
<dbReference type="InterPro" id="IPR003766">
    <property type="entry name" value="Uronate_isomerase"/>
</dbReference>
<dbReference type="NCBIfam" id="NF002794">
    <property type="entry name" value="PRK02925.1"/>
    <property type="match status" value="1"/>
</dbReference>
<dbReference type="PANTHER" id="PTHR30068">
    <property type="entry name" value="URONATE ISOMERASE"/>
    <property type="match status" value="1"/>
</dbReference>
<dbReference type="PANTHER" id="PTHR30068:SF4">
    <property type="entry name" value="URONATE ISOMERASE"/>
    <property type="match status" value="1"/>
</dbReference>
<dbReference type="Pfam" id="PF02614">
    <property type="entry name" value="UxaC"/>
    <property type="match status" value="1"/>
</dbReference>
<dbReference type="SUPFAM" id="SSF51556">
    <property type="entry name" value="Metallo-dependent hydrolases"/>
    <property type="match status" value="1"/>
</dbReference>
<name>UXAC_SALSV</name>
<proteinExistence type="inferred from homology"/>